<name>DPO3X_BUCBP</name>
<accession>Q89A95</accession>
<reference key="1">
    <citation type="journal article" date="2003" name="Proc. Natl. Acad. Sci. U.S.A.">
        <title>Reductive genome evolution in Buchnera aphidicola.</title>
        <authorList>
            <person name="van Ham R.C.H.J."/>
            <person name="Kamerbeek J."/>
            <person name="Palacios C."/>
            <person name="Rausell C."/>
            <person name="Abascal F."/>
            <person name="Bastolla U."/>
            <person name="Fernandez J.M."/>
            <person name="Jimenez L."/>
            <person name="Postigo M."/>
            <person name="Silva F.J."/>
            <person name="Tamames J."/>
            <person name="Viguera E."/>
            <person name="Latorre A."/>
            <person name="Valencia A."/>
            <person name="Moran F."/>
            <person name="Moya A."/>
        </authorList>
    </citation>
    <scope>NUCLEOTIDE SEQUENCE [LARGE SCALE GENOMIC DNA]</scope>
    <source>
        <strain>Bp</strain>
    </source>
</reference>
<comment type="function">
    <text>DNA polymerase III is a complex, multichain enzyme responsible for most of the replicative synthesis in bacteria. This DNA polymerase also exhibits 3' to 5' exonuclease activity.</text>
</comment>
<comment type="catalytic activity">
    <reaction>
        <text>DNA(n) + a 2'-deoxyribonucleoside 5'-triphosphate = DNA(n+1) + diphosphate</text>
        <dbReference type="Rhea" id="RHEA:22508"/>
        <dbReference type="Rhea" id="RHEA-COMP:17339"/>
        <dbReference type="Rhea" id="RHEA-COMP:17340"/>
        <dbReference type="ChEBI" id="CHEBI:33019"/>
        <dbReference type="ChEBI" id="CHEBI:61560"/>
        <dbReference type="ChEBI" id="CHEBI:173112"/>
        <dbReference type="EC" id="2.7.7.7"/>
    </reaction>
</comment>
<comment type="subunit">
    <text evidence="1">DNA polymerase III contains a core (composed of alpha, epsilon and theta chains) that associates with a tau subunit. This core dimerizes to form the POLIII' complex. PolIII' associates with the gamma complex (composed of gamma, delta, delta', psi and chi chains) and with the beta chain to form the complete DNA polymerase III complex (By similarity).</text>
</comment>
<comment type="similarity">
    <text evidence="4">Belongs to the DnaX/STICHEL family.</text>
</comment>
<dbReference type="EC" id="2.7.7.7"/>
<dbReference type="EMBL" id="AE016826">
    <property type="protein sequence ID" value="AAO27135.1"/>
    <property type="molecule type" value="Genomic_DNA"/>
</dbReference>
<dbReference type="RefSeq" id="WP_011091536.1">
    <property type="nucleotide sequence ID" value="NC_004545.1"/>
</dbReference>
<dbReference type="SMR" id="Q89A95"/>
<dbReference type="STRING" id="224915.bbp_425"/>
<dbReference type="KEGG" id="bab:bbp_425"/>
<dbReference type="eggNOG" id="COG2812">
    <property type="taxonomic scope" value="Bacteria"/>
</dbReference>
<dbReference type="HOGENOM" id="CLU_006229_0_1_6"/>
<dbReference type="OrthoDB" id="9810148at2"/>
<dbReference type="Proteomes" id="UP000000601">
    <property type="component" value="Chromosome"/>
</dbReference>
<dbReference type="GO" id="GO:0009360">
    <property type="term" value="C:DNA polymerase III complex"/>
    <property type="evidence" value="ECO:0007669"/>
    <property type="project" value="InterPro"/>
</dbReference>
<dbReference type="GO" id="GO:0005524">
    <property type="term" value="F:ATP binding"/>
    <property type="evidence" value="ECO:0007669"/>
    <property type="project" value="UniProtKB-KW"/>
</dbReference>
<dbReference type="GO" id="GO:0016887">
    <property type="term" value="F:ATP hydrolysis activity"/>
    <property type="evidence" value="ECO:0007669"/>
    <property type="project" value="InterPro"/>
</dbReference>
<dbReference type="GO" id="GO:0003677">
    <property type="term" value="F:DNA binding"/>
    <property type="evidence" value="ECO:0007669"/>
    <property type="project" value="InterPro"/>
</dbReference>
<dbReference type="GO" id="GO:0003887">
    <property type="term" value="F:DNA-directed DNA polymerase activity"/>
    <property type="evidence" value="ECO:0007669"/>
    <property type="project" value="UniProtKB-KW"/>
</dbReference>
<dbReference type="GO" id="GO:0046872">
    <property type="term" value="F:metal ion binding"/>
    <property type="evidence" value="ECO:0007669"/>
    <property type="project" value="UniProtKB-KW"/>
</dbReference>
<dbReference type="GO" id="GO:0006261">
    <property type="term" value="P:DNA-templated DNA replication"/>
    <property type="evidence" value="ECO:0007669"/>
    <property type="project" value="TreeGrafter"/>
</dbReference>
<dbReference type="CDD" id="cd00009">
    <property type="entry name" value="AAA"/>
    <property type="match status" value="1"/>
</dbReference>
<dbReference type="CDD" id="cd18137">
    <property type="entry name" value="HLD_clamp_pol_III_gamma_tau"/>
    <property type="match status" value="1"/>
</dbReference>
<dbReference type="FunFam" id="1.10.8.60:FF:000013">
    <property type="entry name" value="DNA polymerase III subunit gamma/tau"/>
    <property type="match status" value="1"/>
</dbReference>
<dbReference type="FunFam" id="3.40.50.300:FF:000014">
    <property type="entry name" value="DNA polymerase III subunit gamma/tau"/>
    <property type="match status" value="1"/>
</dbReference>
<dbReference type="Gene3D" id="1.10.8.60">
    <property type="match status" value="1"/>
</dbReference>
<dbReference type="Gene3D" id="1.20.272.10">
    <property type="match status" value="1"/>
</dbReference>
<dbReference type="Gene3D" id="3.40.50.300">
    <property type="entry name" value="P-loop containing nucleotide triphosphate hydrolases"/>
    <property type="match status" value="1"/>
</dbReference>
<dbReference type="InterPro" id="IPR003593">
    <property type="entry name" value="AAA+_ATPase"/>
</dbReference>
<dbReference type="InterPro" id="IPR008921">
    <property type="entry name" value="DNA_pol3_clamp-load_cplx_C"/>
</dbReference>
<dbReference type="InterPro" id="IPR022754">
    <property type="entry name" value="DNA_pol_III_gamma-3"/>
</dbReference>
<dbReference type="InterPro" id="IPR012763">
    <property type="entry name" value="DNA_pol_III_sug/sutau_N"/>
</dbReference>
<dbReference type="InterPro" id="IPR050238">
    <property type="entry name" value="DNA_Rep/Repair_Clamp_Loader"/>
</dbReference>
<dbReference type="InterPro" id="IPR045085">
    <property type="entry name" value="HLD_clamp_pol_III_gamma_tau"/>
</dbReference>
<dbReference type="InterPro" id="IPR027417">
    <property type="entry name" value="P-loop_NTPase"/>
</dbReference>
<dbReference type="NCBIfam" id="TIGR02397">
    <property type="entry name" value="dnaX_nterm"/>
    <property type="match status" value="1"/>
</dbReference>
<dbReference type="NCBIfam" id="NF011522">
    <property type="entry name" value="PRK14961.1"/>
    <property type="match status" value="1"/>
</dbReference>
<dbReference type="PANTHER" id="PTHR11669:SF0">
    <property type="entry name" value="PROTEIN STICHEL-LIKE 2"/>
    <property type="match status" value="1"/>
</dbReference>
<dbReference type="PANTHER" id="PTHR11669">
    <property type="entry name" value="REPLICATION FACTOR C / DNA POLYMERASE III GAMMA-TAU SUBUNIT"/>
    <property type="match status" value="1"/>
</dbReference>
<dbReference type="Pfam" id="PF13177">
    <property type="entry name" value="DNA_pol3_delta2"/>
    <property type="match status" value="1"/>
</dbReference>
<dbReference type="Pfam" id="PF12169">
    <property type="entry name" value="DNA_pol3_gamma3"/>
    <property type="match status" value="1"/>
</dbReference>
<dbReference type="Pfam" id="PF22608">
    <property type="entry name" value="DNAX_ATPase_lid"/>
    <property type="match status" value="1"/>
</dbReference>
<dbReference type="SMART" id="SM00382">
    <property type="entry name" value="AAA"/>
    <property type="match status" value="1"/>
</dbReference>
<dbReference type="SUPFAM" id="SSF52540">
    <property type="entry name" value="P-loop containing nucleoside triphosphate hydrolases"/>
    <property type="match status" value="1"/>
</dbReference>
<dbReference type="SUPFAM" id="SSF48019">
    <property type="entry name" value="post-AAA+ oligomerization domain-like"/>
    <property type="match status" value="1"/>
</dbReference>
<feature type="chain" id="PRO_0000105496" description="DNA polymerase III subunit gamma">
    <location>
        <begin position="1"/>
        <end position="370"/>
    </location>
</feature>
<feature type="binding site" evidence="3">
    <location>
        <begin position="45"/>
        <end position="52"/>
    </location>
    <ligand>
        <name>ATP</name>
        <dbReference type="ChEBI" id="CHEBI:30616"/>
    </ligand>
</feature>
<feature type="binding site" evidence="2">
    <location>
        <position position="64"/>
    </location>
    <ligand>
        <name>Zn(2+)</name>
        <dbReference type="ChEBI" id="CHEBI:29105"/>
    </ligand>
</feature>
<feature type="binding site" evidence="2">
    <location>
        <position position="73"/>
    </location>
    <ligand>
        <name>Zn(2+)</name>
        <dbReference type="ChEBI" id="CHEBI:29105"/>
    </ligand>
</feature>
<feature type="binding site" evidence="2">
    <location>
        <position position="76"/>
    </location>
    <ligand>
        <name>Zn(2+)</name>
        <dbReference type="ChEBI" id="CHEBI:29105"/>
    </ligand>
</feature>
<feature type="binding site" evidence="2">
    <location>
        <position position="79"/>
    </location>
    <ligand>
        <name>Zn(2+)</name>
        <dbReference type="ChEBI" id="CHEBI:29105"/>
    </ligand>
</feature>
<protein>
    <recommendedName>
        <fullName>DNA polymerase III subunit gamma</fullName>
        <ecNumber>2.7.7.7</ecNumber>
    </recommendedName>
</protein>
<sequence>MNYHILAKKWRPQTFNDVIGQQYIVSAISNSLLLGRIHHAWLFFGIRGTGKTTIARILAKSLNCKLGISPNPCRKCSNCVEVEQGNFIDLYEVDAASRTKVEDMKELLDNIRYLPSKGRFKIYLIDEVHMLSRYSFNFLLKNIEEPPQHIKFILATTNLEKIPDTILSRCLQFQLKPINLNEIVACISNILHKENITYEIKALSLISQKSEGSLRDAITLTEQMISMGKGNITEKIVRKTLGMLYEDQILYILTTLLNKDLKNLVLCFKYISDTHINFENILVEILQLLHQISIIKIIPSIKLNDTKYSKNMQHAIQKIAELSNYNDIYLYYQTALLGKKELHIAPDQKISIEMTLLRMFNLNTKPIYIK</sequence>
<proteinExistence type="inferred from homology"/>
<keyword id="KW-0067">ATP-binding</keyword>
<keyword id="KW-0235">DNA replication</keyword>
<keyword id="KW-0239">DNA-directed DNA polymerase</keyword>
<keyword id="KW-0479">Metal-binding</keyword>
<keyword id="KW-0547">Nucleotide-binding</keyword>
<keyword id="KW-0548">Nucleotidyltransferase</keyword>
<keyword id="KW-1185">Reference proteome</keyword>
<keyword id="KW-0808">Transferase</keyword>
<keyword id="KW-0862">Zinc</keyword>
<organism>
    <name type="scientific">Buchnera aphidicola subsp. Baizongia pistaciae (strain Bp)</name>
    <dbReference type="NCBI Taxonomy" id="224915"/>
    <lineage>
        <taxon>Bacteria</taxon>
        <taxon>Pseudomonadati</taxon>
        <taxon>Pseudomonadota</taxon>
        <taxon>Gammaproteobacteria</taxon>
        <taxon>Enterobacterales</taxon>
        <taxon>Erwiniaceae</taxon>
        <taxon>Buchnera</taxon>
    </lineage>
</organism>
<gene>
    <name type="primary">dnaX</name>
    <name type="ordered locus">bbp_425</name>
</gene>
<evidence type="ECO:0000250" key="1"/>
<evidence type="ECO:0000250" key="2">
    <source>
        <dbReference type="UniProtKB" id="P06710"/>
    </source>
</evidence>
<evidence type="ECO:0000255" key="3"/>
<evidence type="ECO:0000305" key="4"/>